<accession>Q5WDZ8</accession>
<protein>
    <recommendedName>
        <fullName evidence="1">S-adenosylmethionine synthase</fullName>
        <shortName evidence="1">AdoMet synthase</shortName>
        <ecNumber evidence="1">2.5.1.6</ecNumber>
    </recommendedName>
    <alternativeName>
        <fullName evidence="1">MAT</fullName>
    </alternativeName>
    <alternativeName>
        <fullName evidence="1">Methionine adenosyltransferase</fullName>
    </alternativeName>
</protein>
<keyword id="KW-0067">ATP-binding</keyword>
<keyword id="KW-0963">Cytoplasm</keyword>
<keyword id="KW-0460">Magnesium</keyword>
<keyword id="KW-0479">Metal-binding</keyword>
<keyword id="KW-0547">Nucleotide-binding</keyword>
<keyword id="KW-0554">One-carbon metabolism</keyword>
<keyword id="KW-0630">Potassium</keyword>
<keyword id="KW-1185">Reference proteome</keyword>
<keyword id="KW-0808">Transferase</keyword>
<organism>
    <name type="scientific">Shouchella clausii (strain KSM-K16)</name>
    <name type="common">Alkalihalobacillus clausii</name>
    <dbReference type="NCBI Taxonomy" id="66692"/>
    <lineage>
        <taxon>Bacteria</taxon>
        <taxon>Bacillati</taxon>
        <taxon>Bacillota</taxon>
        <taxon>Bacilli</taxon>
        <taxon>Bacillales</taxon>
        <taxon>Bacillaceae</taxon>
        <taxon>Shouchella</taxon>
    </lineage>
</organism>
<name>METK_SHOC1</name>
<feature type="chain" id="PRO_0000174491" description="S-adenosylmethionine synthase">
    <location>
        <begin position="1"/>
        <end position="405"/>
    </location>
</feature>
<feature type="region of interest" description="Flexible loop" evidence="1">
    <location>
        <begin position="103"/>
        <end position="113"/>
    </location>
</feature>
<feature type="binding site" description="in other chain" evidence="1">
    <location>
        <position position="19"/>
    </location>
    <ligand>
        <name>ATP</name>
        <dbReference type="ChEBI" id="CHEBI:30616"/>
        <note>ligand shared between two neighboring subunits</note>
    </ligand>
</feature>
<feature type="binding site" evidence="1">
    <location>
        <position position="21"/>
    </location>
    <ligand>
        <name>Mg(2+)</name>
        <dbReference type="ChEBI" id="CHEBI:18420"/>
    </ligand>
</feature>
<feature type="binding site" evidence="1">
    <location>
        <position position="47"/>
    </location>
    <ligand>
        <name>K(+)</name>
        <dbReference type="ChEBI" id="CHEBI:29103"/>
    </ligand>
</feature>
<feature type="binding site" description="in other chain" evidence="1">
    <location>
        <position position="60"/>
    </location>
    <ligand>
        <name>L-methionine</name>
        <dbReference type="ChEBI" id="CHEBI:57844"/>
        <note>ligand shared between two neighboring subunits</note>
    </ligand>
</feature>
<feature type="binding site" description="in other chain" evidence="1">
    <location>
        <position position="103"/>
    </location>
    <ligand>
        <name>L-methionine</name>
        <dbReference type="ChEBI" id="CHEBI:57844"/>
        <note>ligand shared between two neighboring subunits</note>
    </ligand>
</feature>
<feature type="binding site" description="in other chain" evidence="1">
    <location>
        <begin position="179"/>
        <end position="181"/>
    </location>
    <ligand>
        <name>ATP</name>
        <dbReference type="ChEBI" id="CHEBI:30616"/>
        <note>ligand shared between two neighboring subunits</note>
    </ligand>
</feature>
<feature type="binding site" description="in other chain" evidence="1">
    <location>
        <begin position="246"/>
        <end position="247"/>
    </location>
    <ligand>
        <name>ATP</name>
        <dbReference type="ChEBI" id="CHEBI:30616"/>
        <note>ligand shared between two neighboring subunits</note>
    </ligand>
</feature>
<feature type="binding site" evidence="1">
    <location>
        <position position="255"/>
    </location>
    <ligand>
        <name>ATP</name>
        <dbReference type="ChEBI" id="CHEBI:30616"/>
        <note>ligand shared between two neighboring subunits</note>
    </ligand>
</feature>
<feature type="binding site" evidence="1">
    <location>
        <position position="255"/>
    </location>
    <ligand>
        <name>L-methionine</name>
        <dbReference type="ChEBI" id="CHEBI:57844"/>
        <note>ligand shared between two neighboring subunits</note>
    </ligand>
</feature>
<feature type="binding site" description="in other chain" evidence="1">
    <location>
        <begin position="261"/>
        <end position="262"/>
    </location>
    <ligand>
        <name>ATP</name>
        <dbReference type="ChEBI" id="CHEBI:30616"/>
        <note>ligand shared between two neighboring subunits</note>
    </ligand>
</feature>
<feature type="binding site" evidence="1">
    <location>
        <position position="278"/>
    </location>
    <ligand>
        <name>ATP</name>
        <dbReference type="ChEBI" id="CHEBI:30616"/>
        <note>ligand shared between two neighboring subunits</note>
    </ligand>
</feature>
<feature type="binding site" evidence="1">
    <location>
        <position position="282"/>
    </location>
    <ligand>
        <name>ATP</name>
        <dbReference type="ChEBI" id="CHEBI:30616"/>
        <note>ligand shared between two neighboring subunits</note>
    </ligand>
</feature>
<feature type="binding site" description="in other chain" evidence="1">
    <location>
        <position position="286"/>
    </location>
    <ligand>
        <name>L-methionine</name>
        <dbReference type="ChEBI" id="CHEBI:57844"/>
        <note>ligand shared between two neighboring subunits</note>
    </ligand>
</feature>
<proteinExistence type="inferred from homology"/>
<dbReference type="EC" id="2.5.1.6" evidence="1"/>
<dbReference type="EMBL" id="AP006627">
    <property type="protein sequence ID" value="BAD65412.1"/>
    <property type="molecule type" value="Genomic_DNA"/>
</dbReference>
<dbReference type="RefSeq" id="WP_011247720.1">
    <property type="nucleotide sequence ID" value="NC_006582.1"/>
</dbReference>
<dbReference type="SMR" id="Q5WDZ8"/>
<dbReference type="STRING" id="66692.ABC2878"/>
<dbReference type="KEGG" id="bcl:ABC2878"/>
<dbReference type="eggNOG" id="COG0192">
    <property type="taxonomic scope" value="Bacteria"/>
</dbReference>
<dbReference type="HOGENOM" id="CLU_041802_1_1_9"/>
<dbReference type="OrthoDB" id="9801686at2"/>
<dbReference type="UniPathway" id="UPA00315">
    <property type="reaction ID" value="UER00080"/>
</dbReference>
<dbReference type="Proteomes" id="UP000001168">
    <property type="component" value="Chromosome"/>
</dbReference>
<dbReference type="GO" id="GO:0005737">
    <property type="term" value="C:cytoplasm"/>
    <property type="evidence" value="ECO:0007669"/>
    <property type="project" value="UniProtKB-SubCell"/>
</dbReference>
<dbReference type="GO" id="GO:0005524">
    <property type="term" value="F:ATP binding"/>
    <property type="evidence" value="ECO:0007669"/>
    <property type="project" value="UniProtKB-UniRule"/>
</dbReference>
<dbReference type="GO" id="GO:0000287">
    <property type="term" value="F:magnesium ion binding"/>
    <property type="evidence" value="ECO:0007669"/>
    <property type="project" value="UniProtKB-UniRule"/>
</dbReference>
<dbReference type="GO" id="GO:0004478">
    <property type="term" value="F:methionine adenosyltransferase activity"/>
    <property type="evidence" value="ECO:0007669"/>
    <property type="project" value="UniProtKB-UniRule"/>
</dbReference>
<dbReference type="GO" id="GO:0006730">
    <property type="term" value="P:one-carbon metabolic process"/>
    <property type="evidence" value="ECO:0007669"/>
    <property type="project" value="UniProtKB-KW"/>
</dbReference>
<dbReference type="GO" id="GO:0006556">
    <property type="term" value="P:S-adenosylmethionine biosynthetic process"/>
    <property type="evidence" value="ECO:0007669"/>
    <property type="project" value="UniProtKB-UniRule"/>
</dbReference>
<dbReference type="CDD" id="cd18079">
    <property type="entry name" value="S-AdoMet_synt"/>
    <property type="match status" value="1"/>
</dbReference>
<dbReference type="FunFam" id="3.30.300.10:FF:000003">
    <property type="entry name" value="S-adenosylmethionine synthase"/>
    <property type="match status" value="1"/>
</dbReference>
<dbReference type="FunFam" id="3.30.300.10:FF:000004">
    <property type="entry name" value="S-adenosylmethionine synthase"/>
    <property type="match status" value="1"/>
</dbReference>
<dbReference type="Gene3D" id="3.30.300.10">
    <property type="match status" value="3"/>
</dbReference>
<dbReference type="HAMAP" id="MF_00086">
    <property type="entry name" value="S_AdoMet_synth1"/>
    <property type="match status" value="1"/>
</dbReference>
<dbReference type="InterPro" id="IPR022631">
    <property type="entry name" value="ADOMET_SYNTHASE_CS"/>
</dbReference>
<dbReference type="InterPro" id="IPR022630">
    <property type="entry name" value="S-AdoMet_synt_C"/>
</dbReference>
<dbReference type="InterPro" id="IPR022629">
    <property type="entry name" value="S-AdoMet_synt_central"/>
</dbReference>
<dbReference type="InterPro" id="IPR022628">
    <property type="entry name" value="S-AdoMet_synt_N"/>
</dbReference>
<dbReference type="InterPro" id="IPR002133">
    <property type="entry name" value="S-AdoMet_synthetase"/>
</dbReference>
<dbReference type="InterPro" id="IPR022636">
    <property type="entry name" value="S-AdoMet_synthetase_sfam"/>
</dbReference>
<dbReference type="NCBIfam" id="TIGR01034">
    <property type="entry name" value="metK"/>
    <property type="match status" value="1"/>
</dbReference>
<dbReference type="PANTHER" id="PTHR11964">
    <property type="entry name" value="S-ADENOSYLMETHIONINE SYNTHETASE"/>
    <property type="match status" value="1"/>
</dbReference>
<dbReference type="Pfam" id="PF02773">
    <property type="entry name" value="S-AdoMet_synt_C"/>
    <property type="match status" value="1"/>
</dbReference>
<dbReference type="Pfam" id="PF02772">
    <property type="entry name" value="S-AdoMet_synt_M"/>
    <property type="match status" value="1"/>
</dbReference>
<dbReference type="Pfam" id="PF00438">
    <property type="entry name" value="S-AdoMet_synt_N"/>
    <property type="match status" value="1"/>
</dbReference>
<dbReference type="PIRSF" id="PIRSF000497">
    <property type="entry name" value="MAT"/>
    <property type="match status" value="1"/>
</dbReference>
<dbReference type="SUPFAM" id="SSF55973">
    <property type="entry name" value="S-adenosylmethionine synthetase"/>
    <property type="match status" value="3"/>
</dbReference>
<dbReference type="PROSITE" id="PS00376">
    <property type="entry name" value="ADOMET_SYNTHASE_1"/>
    <property type="match status" value="1"/>
</dbReference>
<dbReference type="PROSITE" id="PS00377">
    <property type="entry name" value="ADOMET_SYNTHASE_2"/>
    <property type="match status" value="1"/>
</dbReference>
<evidence type="ECO:0000255" key="1">
    <source>
        <dbReference type="HAMAP-Rule" id="MF_00086"/>
    </source>
</evidence>
<comment type="function">
    <text evidence="1">Catalyzes the formation of S-adenosylmethionine (AdoMet) from methionine and ATP. The overall synthetic reaction is composed of two sequential steps, AdoMet formation and the subsequent tripolyphosphate hydrolysis which occurs prior to release of AdoMet from the enzyme.</text>
</comment>
<comment type="catalytic activity">
    <reaction evidence="1">
        <text>L-methionine + ATP + H2O = S-adenosyl-L-methionine + phosphate + diphosphate</text>
        <dbReference type="Rhea" id="RHEA:21080"/>
        <dbReference type="ChEBI" id="CHEBI:15377"/>
        <dbReference type="ChEBI" id="CHEBI:30616"/>
        <dbReference type="ChEBI" id="CHEBI:33019"/>
        <dbReference type="ChEBI" id="CHEBI:43474"/>
        <dbReference type="ChEBI" id="CHEBI:57844"/>
        <dbReference type="ChEBI" id="CHEBI:59789"/>
        <dbReference type="EC" id="2.5.1.6"/>
    </reaction>
</comment>
<comment type="cofactor">
    <cofactor evidence="1">
        <name>Mg(2+)</name>
        <dbReference type="ChEBI" id="CHEBI:18420"/>
    </cofactor>
    <text evidence="1">Binds 2 divalent ions per subunit.</text>
</comment>
<comment type="cofactor">
    <cofactor evidence="1">
        <name>K(+)</name>
        <dbReference type="ChEBI" id="CHEBI:29103"/>
    </cofactor>
    <text evidence="1">Binds 1 potassium ion per subunit.</text>
</comment>
<comment type="pathway">
    <text evidence="1">Amino-acid biosynthesis; S-adenosyl-L-methionine biosynthesis; S-adenosyl-L-methionine from L-methionine: step 1/1.</text>
</comment>
<comment type="subunit">
    <text evidence="1">Homotetramer; dimer of dimers.</text>
</comment>
<comment type="subcellular location">
    <subcellularLocation>
        <location evidence="1">Cytoplasm</location>
    </subcellularLocation>
</comment>
<comment type="similarity">
    <text evidence="1">Belongs to the AdoMet synthase family.</text>
</comment>
<sequence>MSVKRGRHLFTSESVTEGHPDKICDQISDAILDEILKKDPNARVACETSVTTGLVLVAGEITTNTYVDIPSVVRQTIKGIGYTRAKYGFDAETCAVLTSIDEQSADIAQGVDKALEAREGQMTDAEIEAIGAGDQGLMFGFATNETEELMPLPISLSHKLSRRLTEVRKNGTLGYLRPDGKTQVTIEYDENDTPVRVDTIVLSTQHAPEVTLEQIQADLKEHVIEAVVPSALIDEETKYFINPTGRFVIGGPQGDAGLTGRKIIVDTYGGYARHGGGAFSGKDATKVDRSGAYAARYVAKNIVAAGLADKCEVQLAYAIGVAQPVSIAVNTFGTGKAAEDVLVELVRKHFDLRPAGIIRMLDLRRPIYKQTAAYGHFGRTDVPLPWEATDKAAALKEDVLKLEAN</sequence>
<reference key="1">
    <citation type="submission" date="2003-10" db="EMBL/GenBank/DDBJ databases">
        <title>The complete genome sequence of the alkaliphilic Bacillus clausii KSM-K16.</title>
        <authorList>
            <person name="Takaki Y."/>
            <person name="Kageyama Y."/>
            <person name="Shimamura S."/>
            <person name="Suzuki H."/>
            <person name="Nishi S."/>
            <person name="Hatada Y."/>
            <person name="Kawai S."/>
            <person name="Ito S."/>
            <person name="Horikoshi K."/>
        </authorList>
    </citation>
    <scope>NUCLEOTIDE SEQUENCE [LARGE SCALE GENOMIC DNA]</scope>
    <source>
        <strain>KSM-K16</strain>
    </source>
</reference>
<gene>
    <name evidence="1" type="primary">metK</name>
    <name type="ordered locus">ABC2878</name>
</gene>